<name>PSRP_ERWT9</name>
<comment type="function">
    <text evidence="1">Bifunctional serine/threonine kinase and phosphorylase involved in the regulation of the phosphoenolpyruvate synthase (PEPS) by catalyzing its phosphorylation/dephosphorylation.</text>
</comment>
<comment type="catalytic activity">
    <reaction evidence="1">
        <text>[pyruvate, water dikinase] + ADP = [pyruvate, water dikinase]-phosphate + AMP + H(+)</text>
        <dbReference type="Rhea" id="RHEA:46020"/>
        <dbReference type="Rhea" id="RHEA-COMP:11425"/>
        <dbReference type="Rhea" id="RHEA-COMP:11426"/>
        <dbReference type="ChEBI" id="CHEBI:15378"/>
        <dbReference type="ChEBI" id="CHEBI:43176"/>
        <dbReference type="ChEBI" id="CHEBI:68546"/>
        <dbReference type="ChEBI" id="CHEBI:456215"/>
        <dbReference type="ChEBI" id="CHEBI:456216"/>
        <dbReference type="EC" id="2.7.11.33"/>
    </reaction>
</comment>
<comment type="catalytic activity">
    <reaction evidence="1">
        <text>[pyruvate, water dikinase]-phosphate + phosphate + H(+) = [pyruvate, water dikinase] + diphosphate</text>
        <dbReference type="Rhea" id="RHEA:48580"/>
        <dbReference type="Rhea" id="RHEA-COMP:11425"/>
        <dbReference type="Rhea" id="RHEA-COMP:11426"/>
        <dbReference type="ChEBI" id="CHEBI:15378"/>
        <dbReference type="ChEBI" id="CHEBI:33019"/>
        <dbReference type="ChEBI" id="CHEBI:43176"/>
        <dbReference type="ChEBI" id="CHEBI:43474"/>
        <dbReference type="ChEBI" id="CHEBI:68546"/>
        <dbReference type="EC" id="2.7.4.28"/>
    </reaction>
</comment>
<comment type="similarity">
    <text evidence="1">Belongs to the pyruvate, phosphate/water dikinase regulatory protein family. PSRP subfamily.</text>
</comment>
<sequence>MDVNTERSVFYISDGTAITAEVLGHAVMSQFPVATHGVTLPFVETVQRAQAVKAQINALYQQSGLRPLVFISIVTPVIRDIILQSDGFCQDIVQSLVGPLQQELGLLPAPVANRTHGLTAGNLSKYDARIAAIDYTLAHDDGISLRGLEDAQVILLGVSRCGKTPTSLYLAMQFGIRAANYPFIADDMDNLKLPAALKPFQHKLFGLTIEPERLAAIRQERAENTRYASLRQCRLEVGEVEALFRTQQIRYLNSTNYSVEEIATKILDIMSLTRRMY</sequence>
<evidence type="ECO:0000255" key="1">
    <source>
        <dbReference type="HAMAP-Rule" id="MF_01062"/>
    </source>
</evidence>
<feature type="chain" id="PRO_1000136474" description="Putative phosphoenolpyruvate synthase regulatory protein">
    <location>
        <begin position="1"/>
        <end position="277"/>
    </location>
</feature>
<feature type="binding site" evidence="1">
    <location>
        <begin position="157"/>
        <end position="164"/>
    </location>
    <ligand>
        <name>ADP</name>
        <dbReference type="ChEBI" id="CHEBI:456216"/>
    </ligand>
</feature>
<proteinExistence type="inferred from homology"/>
<dbReference type="EC" id="2.7.11.33" evidence="1"/>
<dbReference type="EC" id="2.7.4.28" evidence="1"/>
<dbReference type="EMBL" id="CU468135">
    <property type="protein sequence ID" value="CAO96871.1"/>
    <property type="molecule type" value="Genomic_DNA"/>
</dbReference>
<dbReference type="RefSeq" id="WP_012441557.1">
    <property type="nucleotide sequence ID" value="NC_010694.1"/>
</dbReference>
<dbReference type="SMR" id="B2VK01"/>
<dbReference type="STRING" id="465817.ETA_18250"/>
<dbReference type="KEGG" id="eta:ETA_18250"/>
<dbReference type="eggNOG" id="COG1806">
    <property type="taxonomic scope" value="Bacteria"/>
</dbReference>
<dbReference type="HOGENOM" id="CLU_046206_1_0_6"/>
<dbReference type="OrthoDB" id="9782201at2"/>
<dbReference type="Proteomes" id="UP000001726">
    <property type="component" value="Chromosome"/>
</dbReference>
<dbReference type="GO" id="GO:0043531">
    <property type="term" value="F:ADP binding"/>
    <property type="evidence" value="ECO:0007669"/>
    <property type="project" value="UniProtKB-UniRule"/>
</dbReference>
<dbReference type="GO" id="GO:0005524">
    <property type="term" value="F:ATP binding"/>
    <property type="evidence" value="ECO:0007669"/>
    <property type="project" value="InterPro"/>
</dbReference>
<dbReference type="GO" id="GO:0016776">
    <property type="term" value="F:phosphotransferase activity, phosphate group as acceptor"/>
    <property type="evidence" value="ECO:0007669"/>
    <property type="project" value="UniProtKB-UniRule"/>
</dbReference>
<dbReference type="GO" id="GO:0004674">
    <property type="term" value="F:protein serine/threonine kinase activity"/>
    <property type="evidence" value="ECO:0007669"/>
    <property type="project" value="UniProtKB-UniRule"/>
</dbReference>
<dbReference type="HAMAP" id="MF_01062">
    <property type="entry name" value="PSRP"/>
    <property type="match status" value="1"/>
</dbReference>
<dbReference type="InterPro" id="IPR005177">
    <property type="entry name" value="Kinase-pyrophosphorylase"/>
</dbReference>
<dbReference type="InterPro" id="IPR026530">
    <property type="entry name" value="PSRP"/>
</dbReference>
<dbReference type="NCBIfam" id="NF003742">
    <property type="entry name" value="PRK05339.1"/>
    <property type="match status" value="1"/>
</dbReference>
<dbReference type="PANTHER" id="PTHR31756">
    <property type="entry name" value="PYRUVATE, PHOSPHATE DIKINASE REGULATORY PROTEIN 1, CHLOROPLASTIC"/>
    <property type="match status" value="1"/>
</dbReference>
<dbReference type="PANTHER" id="PTHR31756:SF3">
    <property type="entry name" value="PYRUVATE, PHOSPHATE DIKINASE REGULATORY PROTEIN 1, CHLOROPLASTIC"/>
    <property type="match status" value="1"/>
</dbReference>
<dbReference type="Pfam" id="PF03618">
    <property type="entry name" value="Kinase-PPPase"/>
    <property type="match status" value="1"/>
</dbReference>
<keyword id="KW-0418">Kinase</keyword>
<keyword id="KW-0547">Nucleotide-binding</keyword>
<keyword id="KW-1185">Reference proteome</keyword>
<keyword id="KW-0723">Serine/threonine-protein kinase</keyword>
<keyword id="KW-0808">Transferase</keyword>
<gene>
    <name type="ordered locus">ETA_18250</name>
</gene>
<accession>B2VK01</accession>
<protein>
    <recommendedName>
        <fullName evidence="1">Putative phosphoenolpyruvate synthase regulatory protein</fullName>
        <shortName evidence="1">PEP synthase regulatory protein</shortName>
        <shortName evidence="1">PSRP</shortName>
        <ecNumber evidence="1">2.7.11.33</ecNumber>
        <ecNumber evidence="1">2.7.4.28</ecNumber>
    </recommendedName>
    <alternativeName>
        <fullName evidence="1">Pyruvate, water dikinase regulatory protein</fullName>
    </alternativeName>
</protein>
<organism>
    <name type="scientific">Erwinia tasmaniensis (strain DSM 17950 / CFBP 7177 / CIP 109463 / NCPPB 4357 / Et1/99)</name>
    <dbReference type="NCBI Taxonomy" id="465817"/>
    <lineage>
        <taxon>Bacteria</taxon>
        <taxon>Pseudomonadati</taxon>
        <taxon>Pseudomonadota</taxon>
        <taxon>Gammaproteobacteria</taxon>
        <taxon>Enterobacterales</taxon>
        <taxon>Erwiniaceae</taxon>
        <taxon>Erwinia</taxon>
    </lineage>
</organism>
<reference key="1">
    <citation type="journal article" date="2008" name="Environ. Microbiol.">
        <title>The genome of Erwinia tasmaniensis strain Et1/99, a non-pathogenic bacterium in the genus Erwinia.</title>
        <authorList>
            <person name="Kube M."/>
            <person name="Migdoll A.M."/>
            <person name="Mueller I."/>
            <person name="Kuhl H."/>
            <person name="Beck A."/>
            <person name="Reinhardt R."/>
            <person name="Geider K."/>
        </authorList>
    </citation>
    <scope>NUCLEOTIDE SEQUENCE [LARGE SCALE GENOMIC DNA]</scope>
    <source>
        <strain>DSM 17950 / CFBP 7177 / CIP 109463 / NCPPB 4357 / Et1/99</strain>
    </source>
</reference>